<evidence type="ECO:0000250" key="1">
    <source>
        <dbReference type="UniProtKB" id="O15530"/>
    </source>
</evidence>
<evidence type="ECO:0000250" key="2">
    <source>
        <dbReference type="UniProtKB" id="Q12236"/>
    </source>
</evidence>
<evidence type="ECO:0000255" key="3">
    <source>
        <dbReference type="PROSITE-ProRule" id="PRU00159"/>
    </source>
</evidence>
<evidence type="ECO:0000256" key="4">
    <source>
        <dbReference type="SAM" id="MobiDB-lite"/>
    </source>
</evidence>
<evidence type="ECO:0000303" key="5">
    <source>
    </source>
</evidence>
<evidence type="ECO:0000303" key="6">
    <source>
    </source>
</evidence>
<evidence type="ECO:0000305" key="7"/>
<evidence type="ECO:0000305" key="8">
    <source>
    </source>
</evidence>
<evidence type="ECO:0007829" key="9">
    <source>
        <dbReference type="PDB" id="4C0T"/>
    </source>
</evidence>
<protein>
    <recommendedName>
        <fullName evidence="2">Serine/threonine-protein kinase PKH2</fullName>
        <ecNumber evidence="2">2.7.11.1</ecNumber>
    </recommendedName>
    <alternativeName>
        <fullName evidence="2">PKB-activating kinase homolog 2</fullName>
    </alternativeName>
</protein>
<comment type="function">
    <text evidence="2">Serine/threonine-protein kinase which is part sphingolipid-mediated signaling pathway that is required for the internalization step of endocytosis by regulating eisosome assembly and organization, and modulating the organization of the plasma membrane. Phosphorylates and activates PKC1. Activates YPK1 and YPK2, 2 components of signaling cascade required for maintenance of cell wall integrity. Required for stress-induced P-body assembly and regulates global mRNA decay at the deadenylation step.</text>
</comment>
<comment type="catalytic activity">
    <reaction>
        <text>L-seryl-[protein] + ATP = O-phospho-L-seryl-[protein] + ADP + H(+)</text>
        <dbReference type="Rhea" id="RHEA:17989"/>
        <dbReference type="Rhea" id="RHEA-COMP:9863"/>
        <dbReference type="Rhea" id="RHEA-COMP:11604"/>
        <dbReference type="ChEBI" id="CHEBI:15378"/>
        <dbReference type="ChEBI" id="CHEBI:29999"/>
        <dbReference type="ChEBI" id="CHEBI:30616"/>
        <dbReference type="ChEBI" id="CHEBI:83421"/>
        <dbReference type="ChEBI" id="CHEBI:456216"/>
        <dbReference type="EC" id="2.7.11.1"/>
    </reaction>
</comment>
<comment type="catalytic activity">
    <reaction>
        <text>L-threonyl-[protein] + ATP = O-phospho-L-threonyl-[protein] + ADP + H(+)</text>
        <dbReference type="Rhea" id="RHEA:46608"/>
        <dbReference type="Rhea" id="RHEA-COMP:11060"/>
        <dbReference type="Rhea" id="RHEA-COMP:11605"/>
        <dbReference type="ChEBI" id="CHEBI:15378"/>
        <dbReference type="ChEBI" id="CHEBI:30013"/>
        <dbReference type="ChEBI" id="CHEBI:30616"/>
        <dbReference type="ChEBI" id="CHEBI:61977"/>
        <dbReference type="ChEBI" id="CHEBI:456216"/>
        <dbReference type="EC" id="2.7.11.1"/>
    </reaction>
</comment>
<comment type="subcellular location">
    <subcellularLocation>
        <location evidence="2">Nucleus</location>
    </subcellularLocation>
    <subcellularLocation>
        <location evidence="2">Cytoplasm</location>
        <location evidence="2">Cell cortex</location>
    </subcellularLocation>
    <text evidence="2">Localizes at eisosomes, large, immobile complexes that mark sites of endocytosis near the plasma membrane.</text>
</comment>
<comment type="domain">
    <text evidence="8">The PIF-pocket is a small lobe in the catalytic domain required by the enzyme for the binding to the hydrophobic motif of its substrates. It is an allosteric regulatory site that can accommodate small compounds acting as allosteric inhibitors.</text>
</comment>
<comment type="disruption phenotype">
    <text>Sensitive to cell wall-damaging agents SDS and Congo red.</text>
</comment>
<comment type="similarity">
    <text evidence="7">Belongs to the protein kinase superfamily. AGC Ser/Thr protein kinase family. PDPK1 subfamily.</text>
</comment>
<reference key="1">
    <citation type="journal article" date="2004" name="Proc. Natl. Acad. Sci. U.S.A.">
        <title>The diploid genome sequence of Candida albicans.</title>
        <authorList>
            <person name="Jones T."/>
            <person name="Federspiel N.A."/>
            <person name="Chibana H."/>
            <person name="Dungan J."/>
            <person name="Kalman S."/>
            <person name="Magee B.B."/>
            <person name="Newport G."/>
            <person name="Thorstenson Y.R."/>
            <person name="Agabian N."/>
            <person name="Magee P.T."/>
            <person name="Davis R.W."/>
            <person name="Scherer S."/>
        </authorList>
    </citation>
    <scope>NUCLEOTIDE SEQUENCE [LARGE SCALE GENOMIC DNA]</scope>
    <source>
        <strain>SC5314 / ATCC MYA-2876</strain>
    </source>
</reference>
<reference key="2">
    <citation type="journal article" date="2007" name="Genome Biol.">
        <title>Assembly of the Candida albicans genome into sixteen supercontigs aligned on the eight chromosomes.</title>
        <authorList>
            <person name="van het Hoog M."/>
            <person name="Rast T.J."/>
            <person name="Martchenko M."/>
            <person name="Grindle S."/>
            <person name="Dignard D."/>
            <person name="Hogues H."/>
            <person name="Cuomo C."/>
            <person name="Berriman M."/>
            <person name="Scherer S."/>
            <person name="Magee B.B."/>
            <person name="Whiteway M."/>
            <person name="Chibana H."/>
            <person name="Nantel A."/>
            <person name="Magee P.T."/>
        </authorList>
    </citation>
    <scope>GENOME REANNOTATION</scope>
    <source>
        <strain>SC5314 / ATCC MYA-2876</strain>
    </source>
</reference>
<reference key="3">
    <citation type="journal article" date="2013" name="Genome Biol.">
        <title>Assembly of a phased diploid Candida albicans genome facilitates allele-specific measurements and provides a simple model for repeat and indel structure.</title>
        <authorList>
            <person name="Muzzey D."/>
            <person name="Schwartz K."/>
            <person name="Weissman J.S."/>
            <person name="Sherlock G."/>
        </authorList>
    </citation>
    <scope>NUCLEOTIDE SEQUENCE [LARGE SCALE GENOMIC DNA]</scope>
    <scope>GENOME REANNOTATION</scope>
    <source>
        <strain>SC5314 / ATCC MYA-2876</strain>
    </source>
</reference>
<reference key="4">
    <citation type="journal article" date="2013" name="MBio">
        <title>The MARVEL domain protein Nce102 regulates actin organization and invasive growth of Candida albicans.</title>
        <authorList>
            <person name="Douglas L.M."/>
            <person name="Wang H.X."/>
            <person name="Konopka J.B."/>
        </authorList>
    </citation>
    <scope>DISRUPTION PHENOTYPE</scope>
</reference>
<reference key="5">
    <citation type="journal article" date="2013" name="ACS Chem. Biol.">
        <title>PIF-pocket as a target for C. albicans Pkh selective inhibitors.</title>
        <authorList>
            <person name="Pastor-Flores D."/>
            <person name="Schulze J.O."/>
            <person name="Bahi A."/>
            <person name="Giacometti R."/>
            <person name="Ferrer-Dalmau J."/>
            <person name="Passeron S."/>
            <person name="Engel M."/>
            <person name="Suss E."/>
            <person name="Casamayor A."/>
            <person name="Biondi R.M."/>
        </authorList>
    </citation>
    <scope>X-RAY CRYSTALLOGRAPHY (3.16 ANGSTROMS)</scope>
    <scope>DOMAIN</scope>
    <source>
        <strain>SC5314 / CAI4 / ATCC MYA-682</strain>
    </source>
</reference>
<accession>Q5A3P6</accession>
<accession>A0A1D8PFF1</accession>
<accession>Q5A3V9</accession>
<sequence length="947" mass="106555">MHKFRYSLHQHYSKRNSSDKSKDSPISQNSNEENDSTKLSSSSLQDLHDDLDDIYNNYTLAQGTNNNSVDTLDSENNQAINKFIDKPPAIHGMEPQLPVMHVSSRLSSLGNTTNETGESIAKSAPGTPLSSHSFDFRPHHPRAVTNSSLNVLLDTPNVSSEFNHLVDQTPPNESVERFDDSNNTVDNTEEEENNDDTDEIPKSETLKQNEENWEKKGAAVKTIKTMDGEMKTIRRNVTDFKFGKELGEGSYSTVILATDKITGKQYAVKVLDKRHIIKEKKVKYVNIEKHALNRLSNRLGVISLYFTFQDKDSLYFVLDYASNGELLTLIKRYNTLNEECTRHFGAQILDAIKYMHDNGVIHRDLKPENILLDDKMRIQITDFGTARLLEKKNDESEEYPVDVRAKSFVGTAEYVSPELLENKYCGKPGDVWAFGCIIYQMIAGKPPFKATNEYLTFQKITKLQFAFSAGFPTIIRDLIKKILVLQPSRRATIPEIQKHYFFQSVDFKDFDSIWLSDPPEIGPYKMTAKSMMKVPELNKAPITTVIKKNVKKSTNSNSNTNNVATAVGGSSSNGHKGSSPTPEKEPSPATINNKSTEKVSAASVAAYVLNKPATNQNSSTSEDSSKRSSNSNETRKLSYSQQDYIPGTNILRPQISTRPSVGSYVKTTPSKDRKTLTKVPSNIHQQQEKVKPKVMEVKPATTLEAAWEPYLTHPDERILRIGPVIAHKEPTEPFEKKNKASLHISPLDINKEQRSRSNTSLLTQIVNEVNNNTSELKKVENADESLAIIEPQYNMKRSPTSDSKKSMDIERSASTSGSRISKKAIFKKLGFSHLEKNDSEESNGPSLTEKPQTCTLVVTTHGRALLFIRNDIESNYLLIAEIKLKYPFIHFQELVISQTKFSKLVPSVGVFVISSIDNSLIFEVEKFEVNQWTEALAKSKYNEIGKR</sequence>
<organism>
    <name type="scientific">Candida albicans (strain SC5314 / ATCC MYA-2876)</name>
    <name type="common">Yeast</name>
    <dbReference type="NCBI Taxonomy" id="237561"/>
    <lineage>
        <taxon>Eukaryota</taxon>
        <taxon>Fungi</taxon>
        <taxon>Dikarya</taxon>
        <taxon>Ascomycota</taxon>
        <taxon>Saccharomycotina</taxon>
        <taxon>Pichiomycetes</taxon>
        <taxon>Debaryomycetaceae</taxon>
        <taxon>Candida/Lodderomyces clade</taxon>
        <taxon>Candida</taxon>
    </lineage>
</organism>
<proteinExistence type="evidence at protein level"/>
<name>PKH2_CANAL</name>
<dbReference type="EC" id="2.7.11.1" evidence="2"/>
<dbReference type="EMBL" id="CP017623">
    <property type="protein sequence ID" value="AOW26859.1"/>
    <property type="molecule type" value="Genomic_DNA"/>
</dbReference>
<dbReference type="RefSeq" id="XP_716293.2">
    <property type="nucleotide sequence ID" value="XM_711200.2"/>
</dbReference>
<dbReference type="PDB" id="4C0T">
    <property type="method" value="X-ray"/>
    <property type="resolution" value="3.16 A"/>
    <property type="chains" value="A=1-944"/>
</dbReference>
<dbReference type="PDBsum" id="4C0T"/>
<dbReference type="SMR" id="Q5A3P6"/>
<dbReference type="FunCoup" id="Q5A3P6">
    <property type="interactions" value="397"/>
</dbReference>
<dbReference type="STRING" id="237561.Q5A3P6"/>
<dbReference type="BindingDB" id="Q5A3P6"/>
<dbReference type="GeneID" id="3642058"/>
<dbReference type="KEGG" id="cal:CAALFM_C112410CA"/>
<dbReference type="eggNOG" id="KOG0592">
    <property type="taxonomic scope" value="Eukaryota"/>
</dbReference>
<dbReference type="HOGENOM" id="CLU_005768_0_0_1"/>
<dbReference type="InParanoid" id="Q5A3P6"/>
<dbReference type="OrthoDB" id="347657at2759"/>
<dbReference type="EvolutionaryTrace" id="Q5A3P6"/>
<dbReference type="PRO" id="PR:Q5A3P6"/>
<dbReference type="Proteomes" id="UP000000559">
    <property type="component" value="Chromosome 1"/>
</dbReference>
<dbReference type="GO" id="GO:0005938">
    <property type="term" value="C:cell cortex"/>
    <property type="evidence" value="ECO:0007669"/>
    <property type="project" value="UniProtKB-SubCell"/>
</dbReference>
<dbReference type="GO" id="GO:0005634">
    <property type="term" value="C:nucleus"/>
    <property type="evidence" value="ECO:0007669"/>
    <property type="project" value="UniProtKB-SubCell"/>
</dbReference>
<dbReference type="GO" id="GO:0005524">
    <property type="term" value="F:ATP binding"/>
    <property type="evidence" value="ECO:0007669"/>
    <property type="project" value="UniProtKB-KW"/>
</dbReference>
<dbReference type="GO" id="GO:0106310">
    <property type="term" value="F:protein serine kinase activity"/>
    <property type="evidence" value="ECO:0007669"/>
    <property type="project" value="RHEA"/>
</dbReference>
<dbReference type="GO" id="GO:0004674">
    <property type="term" value="F:protein serine/threonine kinase activity"/>
    <property type="evidence" value="ECO:0000318"/>
    <property type="project" value="GO_Central"/>
</dbReference>
<dbReference type="GO" id="GO:0006897">
    <property type="term" value="P:endocytosis"/>
    <property type="evidence" value="ECO:0007669"/>
    <property type="project" value="UniProtKB-KW"/>
</dbReference>
<dbReference type="GO" id="GO:0030447">
    <property type="term" value="P:filamentous growth"/>
    <property type="evidence" value="ECO:0007669"/>
    <property type="project" value="UniProtKB-ARBA"/>
</dbReference>
<dbReference type="GO" id="GO:0035556">
    <property type="term" value="P:intracellular signal transduction"/>
    <property type="evidence" value="ECO:0000318"/>
    <property type="project" value="GO_Central"/>
</dbReference>
<dbReference type="CDD" id="cd05581">
    <property type="entry name" value="STKc_PDK1"/>
    <property type="match status" value="1"/>
</dbReference>
<dbReference type="DisProt" id="DP02500"/>
<dbReference type="FunFam" id="3.30.200.20:FF:000128">
    <property type="entry name" value="Serine/threonine-protein kinase ksg1"/>
    <property type="match status" value="1"/>
</dbReference>
<dbReference type="FunFam" id="1.10.510.10:FF:000534">
    <property type="entry name" value="Serine/threonine-protein kinase PKH2"/>
    <property type="match status" value="1"/>
</dbReference>
<dbReference type="Gene3D" id="3.30.200.20">
    <property type="entry name" value="Phosphorylase Kinase, domain 1"/>
    <property type="match status" value="1"/>
</dbReference>
<dbReference type="Gene3D" id="1.10.510.10">
    <property type="entry name" value="Transferase(Phosphotransferase) domain 1"/>
    <property type="match status" value="1"/>
</dbReference>
<dbReference type="InterPro" id="IPR011009">
    <property type="entry name" value="Kinase-like_dom_sf"/>
</dbReference>
<dbReference type="InterPro" id="IPR039046">
    <property type="entry name" value="PDPK1"/>
</dbReference>
<dbReference type="InterPro" id="IPR000719">
    <property type="entry name" value="Prot_kinase_dom"/>
</dbReference>
<dbReference type="InterPro" id="IPR017441">
    <property type="entry name" value="Protein_kinase_ATP_BS"/>
</dbReference>
<dbReference type="InterPro" id="IPR008271">
    <property type="entry name" value="Ser/Thr_kinase_AS"/>
</dbReference>
<dbReference type="InterPro" id="IPR050236">
    <property type="entry name" value="Ser_Thr_kinase_AGC"/>
</dbReference>
<dbReference type="PANTHER" id="PTHR24356:SF163">
    <property type="entry name" value="3-PHOSPHOINOSITIDE-DEPENDENT PROTEIN KINASE 1-RELATED"/>
    <property type="match status" value="1"/>
</dbReference>
<dbReference type="PANTHER" id="PTHR24356">
    <property type="entry name" value="SERINE/THREONINE-PROTEIN KINASE"/>
    <property type="match status" value="1"/>
</dbReference>
<dbReference type="Pfam" id="PF00069">
    <property type="entry name" value="Pkinase"/>
    <property type="match status" value="1"/>
</dbReference>
<dbReference type="SMART" id="SM00220">
    <property type="entry name" value="S_TKc"/>
    <property type="match status" value="1"/>
</dbReference>
<dbReference type="SUPFAM" id="SSF56112">
    <property type="entry name" value="Protein kinase-like (PK-like)"/>
    <property type="match status" value="1"/>
</dbReference>
<dbReference type="PROSITE" id="PS00107">
    <property type="entry name" value="PROTEIN_KINASE_ATP"/>
    <property type="match status" value="1"/>
</dbReference>
<dbReference type="PROSITE" id="PS50011">
    <property type="entry name" value="PROTEIN_KINASE_DOM"/>
    <property type="match status" value="1"/>
</dbReference>
<dbReference type="PROSITE" id="PS00108">
    <property type="entry name" value="PROTEIN_KINASE_ST"/>
    <property type="match status" value="1"/>
</dbReference>
<keyword id="KW-0002">3D-structure</keyword>
<keyword id="KW-0067">ATP-binding</keyword>
<keyword id="KW-0963">Cytoplasm</keyword>
<keyword id="KW-0254">Endocytosis</keyword>
<keyword id="KW-0418">Kinase</keyword>
<keyword id="KW-0547">Nucleotide-binding</keyword>
<keyword id="KW-0539">Nucleus</keyword>
<keyword id="KW-1185">Reference proteome</keyword>
<keyword id="KW-0723">Serine/threonine-protein kinase</keyword>
<keyword id="KW-0808">Transferase</keyword>
<feature type="chain" id="PRO_0000433083" description="Serine/threonine-protein kinase PKH2">
    <location>
        <begin position="1"/>
        <end position="947"/>
    </location>
</feature>
<feature type="domain" description="Protein kinase" evidence="3">
    <location>
        <begin position="240"/>
        <end position="502"/>
    </location>
</feature>
<feature type="region of interest" description="Disordered" evidence="4">
    <location>
        <begin position="1"/>
        <end position="43"/>
    </location>
</feature>
<feature type="region of interest" description="Disordered" evidence="4">
    <location>
        <begin position="108"/>
        <end position="132"/>
    </location>
</feature>
<feature type="region of interest" description="Disordered" evidence="4">
    <location>
        <begin position="162"/>
        <end position="212"/>
    </location>
</feature>
<feature type="region of interest" description="PIF-pocket" evidence="8">
    <location>
        <begin position="271"/>
        <end position="316"/>
    </location>
</feature>
<feature type="region of interest" description="Disordered" evidence="4">
    <location>
        <begin position="550"/>
        <end position="598"/>
    </location>
</feature>
<feature type="region of interest" description="Disordered" evidence="4">
    <location>
        <begin position="611"/>
        <end position="644"/>
    </location>
</feature>
<feature type="region of interest" description="Disordered" evidence="4">
    <location>
        <begin position="660"/>
        <end position="686"/>
    </location>
</feature>
<feature type="region of interest" description="Disordered" evidence="4">
    <location>
        <begin position="794"/>
        <end position="816"/>
    </location>
</feature>
<feature type="compositionally biased region" description="Basic residues" evidence="4">
    <location>
        <begin position="1"/>
        <end position="14"/>
    </location>
</feature>
<feature type="compositionally biased region" description="Polar residues" evidence="4">
    <location>
        <begin position="108"/>
        <end position="117"/>
    </location>
</feature>
<feature type="compositionally biased region" description="Acidic residues" evidence="4">
    <location>
        <begin position="187"/>
        <end position="198"/>
    </location>
</feature>
<feature type="compositionally biased region" description="Basic and acidic residues" evidence="4">
    <location>
        <begin position="199"/>
        <end position="212"/>
    </location>
</feature>
<feature type="compositionally biased region" description="Low complexity" evidence="4">
    <location>
        <begin position="550"/>
        <end position="579"/>
    </location>
</feature>
<feature type="compositionally biased region" description="Low complexity" evidence="4">
    <location>
        <begin position="618"/>
        <end position="632"/>
    </location>
</feature>
<feature type="compositionally biased region" description="Basic and acidic residues" evidence="4">
    <location>
        <begin position="802"/>
        <end position="811"/>
    </location>
</feature>
<feature type="active site" description="Proton acceptor" evidence="3">
    <location>
        <position position="364"/>
    </location>
</feature>
<feature type="binding site" evidence="1">
    <location>
        <begin position="250"/>
        <end position="252"/>
    </location>
    <ligand>
        <name>ATP</name>
        <dbReference type="ChEBI" id="CHEBI:30616"/>
    </ligand>
</feature>
<feature type="binding site" evidence="1">
    <location>
        <position position="269"/>
    </location>
    <ligand>
        <name>ATP</name>
        <dbReference type="ChEBI" id="CHEBI:30616"/>
    </ligand>
</feature>
<feature type="binding site" evidence="1">
    <location>
        <begin position="319"/>
        <end position="321"/>
    </location>
    <ligand>
        <name>ATP</name>
        <dbReference type="ChEBI" id="CHEBI:30616"/>
    </ligand>
</feature>
<feature type="binding site" evidence="1">
    <location>
        <position position="325"/>
    </location>
    <ligand>
        <name>ATP</name>
        <dbReference type="ChEBI" id="CHEBI:30616"/>
    </ligand>
</feature>
<feature type="binding site" evidence="1">
    <location>
        <position position="368"/>
    </location>
    <ligand>
        <name>ATP</name>
        <dbReference type="ChEBI" id="CHEBI:30616"/>
    </ligand>
</feature>
<feature type="binding site" evidence="1">
    <location>
        <position position="382"/>
    </location>
    <ligand>
        <name>ATP</name>
        <dbReference type="ChEBI" id="CHEBI:30616"/>
    </ligand>
</feature>
<feature type="helix" evidence="9">
    <location>
        <begin position="237"/>
        <end position="239"/>
    </location>
</feature>
<feature type="strand" evidence="9">
    <location>
        <begin position="240"/>
        <end position="248"/>
    </location>
</feature>
<feature type="strand" evidence="9">
    <location>
        <begin position="250"/>
        <end position="259"/>
    </location>
</feature>
<feature type="turn" evidence="9">
    <location>
        <begin position="260"/>
        <end position="262"/>
    </location>
</feature>
<feature type="strand" evidence="9">
    <location>
        <begin position="265"/>
        <end position="272"/>
    </location>
</feature>
<feature type="helix" evidence="9">
    <location>
        <begin position="273"/>
        <end position="278"/>
    </location>
</feature>
<feature type="helix" evidence="9">
    <location>
        <begin position="282"/>
        <end position="294"/>
    </location>
</feature>
<feature type="strand" evidence="9">
    <location>
        <begin position="299"/>
        <end position="301"/>
    </location>
</feature>
<feature type="strand" evidence="9">
    <location>
        <begin position="306"/>
        <end position="309"/>
    </location>
</feature>
<feature type="strand" evidence="9">
    <location>
        <begin position="311"/>
        <end position="319"/>
    </location>
</feature>
<feature type="helix" evidence="9">
    <location>
        <begin position="326"/>
        <end position="330"/>
    </location>
</feature>
<feature type="strand" evidence="9">
    <location>
        <begin position="333"/>
        <end position="335"/>
    </location>
</feature>
<feature type="helix" evidence="9">
    <location>
        <begin position="338"/>
        <end position="357"/>
    </location>
</feature>
<feature type="strand" evidence="9">
    <location>
        <begin position="369"/>
        <end position="372"/>
    </location>
</feature>
<feature type="strand" evidence="9">
    <location>
        <begin position="378"/>
        <end position="380"/>
    </location>
</feature>
<feature type="helix" evidence="9">
    <location>
        <begin position="383"/>
        <end position="385"/>
    </location>
</feature>
<feature type="strand" evidence="9">
    <location>
        <begin position="392"/>
        <end position="394"/>
    </location>
</feature>
<feature type="strand" evidence="9">
    <location>
        <begin position="405"/>
        <end position="407"/>
    </location>
</feature>
<feature type="helix" evidence="9">
    <location>
        <begin position="417"/>
        <end position="422"/>
    </location>
</feature>
<feature type="helix" evidence="9">
    <location>
        <begin position="427"/>
        <end position="443"/>
    </location>
</feature>
<feature type="strand" evidence="9">
    <location>
        <begin position="451"/>
        <end position="453"/>
    </location>
</feature>
<feature type="helix" evidence="9">
    <location>
        <begin position="454"/>
        <end position="462"/>
    </location>
</feature>
<feature type="helix" evidence="9">
    <location>
        <begin position="473"/>
        <end position="482"/>
    </location>
</feature>
<feature type="turn" evidence="9">
    <location>
        <begin position="487"/>
        <end position="489"/>
    </location>
</feature>
<feature type="helix" evidence="9">
    <location>
        <begin position="493"/>
        <end position="497"/>
    </location>
</feature>
<feature type="strand" evidence="9">
    <location>
        <begin position="499"/>
        <end position="502"/>
    </location>
</feature>
<feature type="helix" evidence="9">
    <location>
        <begin position="510"/>
        <end position="514"/>
    </location>
</feature>
<gene>
    <name evidence="5" type="primary">PKH2</name>
    <name evidence="6" type="synonym">PKH1</name>
    <name type="ordered locus">CAALFM_C112410CA</name>
    <name type="ORF">CaO19.12690</name>
    <name type="ORF">CaO19.5224</name>
    <name type="ORF">orf19.5224</name>
</gene>